<accession>C4ZTH2</accession>
<keyword id="KW-0686">Riboflavin biosynthesis</keyword>
<keyword id="KW-0808">Transferase</keyword>
<name>RISB_ECOBW</name>
<organism>
    <name type="scientific">Escherichia coli (strain K12 / MC4100 / BW2952)</name>
    <dbReference type="NCBI Taxonomy" id="595496"/>
    <lineage>
        <taxon>Bacteria</taxon>
        <taxon>Pseudomonadati</taxon>
        <taxon>Pseudomonadota</taxon>
        <taxon>Gammaproteobacteria</taxon>
        <taxon>Enterobacterales</taxon>
        <taxon>Enterobacteriaceae</taxon>
        <taxon>Escherichia</taxon>
    </lineage>
</organism>
<feature type="chain" id="PRO_1000203789" description="6,7-dimethyl-8-ribityllumazine synthase">
    <location>
        <begin position="1"/>
        <end position="156"/>
    </location>
</feature>
<feature type="active site" description="Proton donor" evidence="1">
    <location>
        <position position="89"/>
    </location>
</feature>
<feature type="binding site" evidence="1">
    <location>
        <position position="22"/>
    </location>
    <ligand>
        <name>5-amino-6-(D-ribitylamino)uracil</name>
        <dbReference type="ChEBI" id="CHEBI:15934"/>
    </ligand>
</feature>
<feature type="binding site" evidence="1">
    <location>
        <begin position="57"/>
        <end position="59"/>
    </location>
    <ligand>
        <name>5-amino-6-(D-ribitylamino)uracil</name>
        <dbReference type="ChEBI" id="CHEBI:15934"/>
    </ligand>
</feature>
<feature type="binding site" evidence="1">
    <location>
        <begin position="81"/>
        <end position="83"/>
    </location>
    <ligand>
        <name>5-amino-6-(D-ribitylamino)uracil</name>
        <dbReference type="ChEBI" id="CHEBI:15934"/>
    </ligand>
</feature>
<feature type="binding site" evidence="1">
    <location>
        <begin position="86"/>
        <end position="87"/>
    </location>
    <ligand>
        <name>(2S)-2-hydroxy-3-oxobutyl phosphate</name>
        <dbReference type="ChEBI" id="CHEBI:58830"/>
    </ligand>
</feature>
<feature type="binding site" evidence="1">
    <location>
        <position position="114"/>
    </location>
    <ligand>
        <name>5-amino-6-(D-ribitylamino)uracil</name>
        <dbReference type="ChEBI" id="CHEBI:15934"/>
    </ligand>
</feature>
<feature type="binding site" evidence="1">
    <location>
        <position position="128"/>
    </location>
    <ligand>
        <name>(2S)-2-hydroxy-3-oxobutyl phosphate</name>
        <dbReference type="ChEBI" id="CHEBI:58830"/>
    </ligand>
</feature>
<protein>
    <recommendedName>
        <fullName evidence="1">6,7-dimethyl-8-ribityllumazine synthase</fullName>
        <shortName evidence="1">DMRL synthase</shortName>
        <shortName evidence="1">LS</shortName>
        <shortName evidence="1">Lumazine synthase</shortName>
        <ecNumber evidence="1">2.5.1.78</ecNumber>
    </recommendedName>
</protein>
<dbReference type="EC" id="2.5.1.78" evidence="1"/>
<dbReference type="EMBL" id="CP001396">
    <property type="protein sequence ID" value="ACR65461.1"/>
    <property type="molecule type" value="Genomic_DNA"/>
</dbReference>
<dbReference type="SMR" id="C4ZTH2"/>
<dbReference type="KEGG" id="ebw:BWG_0297"/>
<dbReference type="HOGENOM" id="CLU_089358_1_1_6"/>
<dbReference type="UniPathway" id="UPA00275">
    <property type="reaction ID" value="UER00404"/>
</dbReference>
<dbReference type="GO" id="GO:0005829">
    <property type="term" value="C:cytosol"/>
    <property type="evidence" value="ECO:0007669"/>
    <property type="project" value="TreeGrafter"/>
</dbReference>
<dbReference type="GO" id="GO:0009349">
    <property type="term" value="C:riboflavin synthase complex"/>
    <property type="evidence" value="ECO:0007669"/>
    <property type="project" value="InterPro"/>
</dbReference>
<dbReference type="GO" id="GO:0000906">
    <property type="term" value="F:6,7-dimethyl-8-ribityllumazine synthase activity"/>
    <property type="evidence" value="ECO:0007669"/>
    <property type="project" value="UniProtKB-UniRule"/>
</dbReference>
<dbReference type="GO" id="GO:0009231">
    <property type="term" value="P:riboflavin biosynthetic process"/>
    <property type="evidence" value="ECO:0007669"/>
    <property type="project" value="UniProtKB-UniRule"/>
</dbReference>
<dbReference type="CDD" id="cd09209">
    <property type="entry name" value="Lumazine_synthase-I"/>
    <property type="match status" value="1"/>
</dbReference>
<dbReference type="FunFam" id="3.40.50.960:FF:000001">
    <property type="entry name" value="6,7-dimethyl-8-ribityllumazine synthase"/>
    <property type="match status" value="1"/>
</dbReference>
<dbReference type="Gene3D" id="3.40.50.960">
    <property type="entry name" value="Lumazine/riboflavin synthase"/>
    <property type="match status" value="1"/>
</dbReference>
<dbReference type="HAMAP" id="MF_00178">
    <property type="entry name" value="Lumazine_synth"/>
    <property type="match status" value="1"/>
</dbReference>
<dbReference type="InterPro" id="IPR034964">
    <property type="entry name" value="LS"/>
</dbReference>
<dbReference type="InterPro" id="IPR002180">
    <property type="entry name" value="LS/RS"/>
</dbReference>
<dbReference type="InterPro" id="IPR036467">
    <property type="entry name" value="LS/RS_sf"/>
</dbReference>
<dbReference type="NCBIfam" id="TIGR00114">
    <property type="entry name" value="lumazine-synth"/>
    <property type="match status" value="1"/>
</dbReference>
<dbReference type="NCBIfam" id="NF000812">
    <property type="entry name" value="PRK00061.1-4"/>
    <property type="match status" value="1"/>
</dbReference>
<dbReference type="PANTHER" id="PTHR21058:SF0">
    <property type="entry name" value="6,7-DIMETHYL-8-RIBITYLLUMAZINE SYNTHASE"/>
    <property type="match status" value="1"/>
</dbReference>
<dbReference type="PANTHER" id="PTHR21058">
    <property type="entry name" value="6,7-DIMETHYL-8-RIBITYLLUMAZINE SYNTHASE DMRL SYNTHASE LUMAZINE SYNTHASE"/>
    <property type="match status" value="1"/>
</dbReference>
<dbReference type="Pfam" id="PF00885">
    <property type="entry name" value="DMRL_synthase"/>
    <property type="match status" value="1"/>
</dbReference>
<dbReference type="SUPFAM" id="SSF52121">
    <property type="entry name" value="Lumazine synthase"/>
    <property type="match status" value="1"/>
</dbReference>
<sequence length="156" mass="16157">MNIIEANVATPDARVAITIARFNNFINDSLLEGAIDALKRIGQVKDENITVVWVPGAYELPLAAGALAKTGKYDAVIALGTVIRGGTAHFEYVAGGASNGLAHVAQDSEIPVAFGVLTTESIEQAIERAGTKAGNKGAEAALTALEMINVLKAIKA</sequence>
<comment type="function">
    <text evidence="1">Catalyzes the formation of 6,7-dimethyl-8-ribityllumazine by condensation of 5-amino-6-(D-ribitylamino)uracil with 3,4-dihydroxy-2-butanone 4-phosphate. This is the penultimate step in the biosynthesis of riboflavin.</text>
</comment>
<comment type="catalytic activity">
    <reaction evidence="1">
        <text>(2S)-2-hydroxy-3-oxobutyl phosphate + 5-amino-6-(D-ribitylamino)uracil = 6,7-dimethyl-8-(1-D-ribityl)lumazine + phosphate + 2 H2O + H(+)</text>
        <dbReference type="Rhea" id="RHEA:26152"/>
        <dbReference type="ChEBI" id="CHEBI:15377"/>
        <dbReference type="ChEBI" id="CHEBI:15378"/>
        <dbReference type="ChEBI" id="CHEBI:15934"/>
        <dbReference type="ChEBI" id="CHEBI:43474"/>
        <dbReference type="ChEBI" id="CHEBI:58201"/>
        <dbReference type="ChEBI" id="CHEBI:58830"/>
        <dbReference type="EC" id="2.5.1.78"/>
    </reaction>
</comment>
<comment type="pathway">
    <text evidence="1">Cofactor biosynthesis; riboflavin biosynthesis; riboflavin from 2-hydroxy-3-oxobutyl phosphate and 5-amino-6-(D-ribitylamino)uracil: step 1/2.</text>
</comment>
<comment type="subunit">
    <text evidence="1">Forms an icosahedral capsid composed of 60 subunits, arranged as a dodecamer of pentamers.</text>
</comment>
<comment type="similarity">
    <text evidence="1">Belongs to the DMRL synthase family.</text>
</comment>
<proteinExistence type="inferred from homology"/>
<gene>
    <name evidence="1" type="primary">ribH</name>
    <name type="ordered locus">BWG_0297</name>
</gene>
<evidence type="ECO:0000255" key="1">
    <source>
        <dbReference type="HAMAP-Rule" id="MF_00178"/>
    </source>
</evidence>
<reference key="1">
    <citation type="journal article" date="2009" name="J. Bacteriol.">
        <title>Genomic sequencing reveals regulatory mutations and recombinational events in the widely used MC4100 lineage of Escherichia coli K-12.</title>
        <authorList>
            <person name="Ferenci T."/>
            <person name="Zhou Z."/>
            <person name="Betteridge T."/>
            <person name="Ren Y."/>
            <person name="Liu Y."/>
            <person name="Feng L."/>
            <person name="Reeves P.R."/>
            <person name="Wang L."/>
        </authorList>
    </citation>
    <scope>NUCLEOTIDE SEQUENCE [LARGE SCALE GENOMIC DNA]</scope>
    <source>
        <strain>K12 / MC4100 / BW2952</strain>
    </source>
</reference>